<accession>A6QBN8</accession>
<organism>
    <name type="scientific">Sulfurovum sp. (strain NBC37-1)</name>
    <dbReference type="NCBI Taxonomy" id="387093"/>
    <lineage>
        <taxon>Bacteria</taxon>
        <taxon>Pseudomonadati</taxon>
        <taxon>Campylobacterota</taxon>
        <taxon>Epsilonproteobacteria</taxon>
        <taxon>Campylobacterales</taxon>
        <taxon>Sulfurovaceae</taxon>
        <taxon>Sulfurovum</taxon>
    </lineage>
</organism>
<proteinExistence type="inferred from homology"/>
<evidence type="ECO:0000255" key="1">
    <source>
        <dbReference type="HAMAP-Rule" id="MF_01458"/>
    </source>
</evidence>
<evidence type="ECO:0000256" key="2">
    <source>
        <dbReference type="SAM" id="MobiDB-lite"/>
    </source>
</evidence>
<comment type="function">
    <text evidence="1">Acts as a processive, ATP-dependent zinc metallopeptidase for both cytoplasmic and membrane proteins. Plays a role in the quality control of integral membrane proteins.</text>
</comment>
<comment type="cofactor">
    <cofactor evidence="1">
        <name>Zn(2+)</name>
        <dbReference type="ChEBI" id="CHEBI:29105"/>
    </cofactor>
    <text evidence="1">Binds 1 zinc ion per subunit.</text>
</comment>
<comment type="subunit">
    <text evidence="1">Homohexamer.</text>
</comment>
<comment type="subcellular location">
    <subcellularLocation>
        <location evidence="1">Cell inner membrane</location>
        <topology evidence="1">Multi-pass membrane protein</topology>
        <orientation evidence="1">Cytoplasmic side</orientation>
    </subcellularLocation>
</comment>
<comment type="similarity">
    <text evidence="1">In the central section; belongs to the AAA ATPase family.</text>
</comment>
<comment type="similarity">
    <text evidence="1">In the C-terminal section; belongs to the peptidase M41 family.</text>
</comment>
<gene>
    <name evidence="1" type="primary">ftsH</name>
    <name type="ordered locus">SUN_1953</name>
</gene>
<dbReference type="EC" id="3.4.24.-" evidence="1"/>
<dbReference type="EMBL" id="AP009179">
    <property type="protein sequence ID" value="BAF72897.1"/>
    <property type="molecule type" value="Genomic_DNA"/>
</dbReference>
<dbReference type="RefSeq" id="WP_012083718.1">
    <property type="nucleotide sequence ID" value="NC_009663.1"/>
</dbReference>
<dbReference type="SMR" id="A6QBN8"/>
<dbReference type="STRING" id="387093.SUN_1953"/>
<dbReference type="KEGG" id="sun:SUN_1953"/>
<dbReference type="eggNOG" id="COG0465">
    <property type="taxonomic scope" value="Bacteria"/>
</dbReference>
<dbReference type="HOGENOM" id="CLU_000688_16_2_7"/>
<dbReference type="OrthoDB" id="9809379at2"/>
<dbReference type="Proteomes" id="UP000006378">
    <property type="component" value="Chromosome"/>
</dbReference>
<dbReference type="GO" id="GO:0005886">
    <property type="term" value="C:plasma membrane"/>
    <property type="evidence" value="ECO:0007669"/>
    <property type="project" value="UniProtKB-SubCell"/>
</dbReference>
<dbReference type="GO" id="GO:0005524">
    <property type="term" value="F:ATP binding"/>
    <property type="evidence" value="ECO:0007669"/>
    <property type="project" value="UniProtKB-UniRule"/>
</dbReference>
<dbReference type="GO" id="GO:0016887">
    <property type="term" value="F:ATP hydrolysis activity"/>
    <property type="evidence" value="ECO:0007669"/>
    <property type="project" value="UniProtKB-UniRule"/>
</dbReference>
<dbReference type="GO" id="GO:0004176">
    <property type="term" value="F:ATP-dependent peptidase activity"/>
    <property type="evidence" value="ECO:0007669"/>
    <property type="project" value="InterPro"/>
</dbReference>
<dbReference type="GO" id="GO:0004222">
    <property type="term" value="F:metalloendopeptidase activity"/>
    <property type="evidence" value="ECO:0007669"/>
    <property type="project" value="InterPro"/>
</dbReference>
<dbReference type="GO" id="GO:0008270">
    <property type="term" value="F:zinc ion binding"/>
    <property type="evidence" value="ECO:0007669"/>
    <property type="project" value="UniProtKB-UniRule"/>
</dbReference>
<dbReference type="GO" id="GO:0030163">
    <property type="term" value="P:protein catabolic process"/>
    <property type="evidence" value="ECO:0007669"/>
    <property type="project" value="UniProtKB-UniRule"/>
</dbReference>
<dbReference type="GO" id="GO:0006508">
    <property type="term" value="P:proteolysis"/>
    <property type="evidence" value="ECO:0007669"/>
    <property type="project" value="UniProtKB-KW"/>
</dbReference>
<dbReference type="CDD" id="cd19501">
    <property type="entry name" value="RecA-like_FtsH"/>
    <property type="match status" value="1"/>
</dbReference>
<dbReference type="FunFam" id="1.10.8.60:FF:000001">
    <property type="entry name" value="ATP-dependent zinc metalloprotease FtsH"/>
    <property type="match status" value="1"/>
</dbReference>
<dbReference type="FunFam" id="1.20.58.760:FF:000001">
    <property type="entry name" value="ATP-dependent zinc metalloprotease FtsH"/>
    <property type="match status" value="1"/>
</dbReference>
<dbReference type="FunFam" id="3.40.50.300:FF:000001">
    <property type="entry name" value="ATP-dependent zinc metalloprotease FtsH"/>
    <property type="match status" value="1"/>
</dbReference>
<dbReference type="Gene3D" id="1.10.8.60">
    <property type="match status" value="1"/>
</dbReference>
<dbReference type="Gene3D" id="3.30.720.210">
    <property type="match status" value="1"/>
</dbReference>
<dbReference type="Gene3D" id="3.40.50.300">
    <property type="entry name" value="P-loop containing nucleotide triphosphate hydrolases"/>
    <property type="match status" value="1"/>
</dbReference>
<dbReference type="Gene3D" id="1.20.58.760">
    <property type="entry name" value="Peptidase M41"/>
    <property type="match status" value="1"/>
</dbReference>
<dbReference type="HAMAP" id="MF_01458">
    <property type="entry name" value="FtsH"/>
    <property type="match status" value="1"/>
</dbReference>
<dbReference type="InterPro" id="IPR003593">
    <property type="entry name" value="AAA+_ATPase"/>
</dbReference>
<dbReference type="InterPro" id="IPR041569">
    <property type="entry name" value="AAA_lid_3"/>
</dbReference>
<dbReference type="InterPro" id="IPR050928">
    <property type="entry name" value="ATP-dep_Zn_Metalloprotease"/>
</dbReference>
<dbReference type="InterPro" id="IPR003959">
    <property type="entry name" value="ATPase_AAA_core"/>
</dbReference>
<dbReference type="InterPro" id="IPR003960">
    <property type="entry name" value="ATPase_AAA_CS"/>
</dbReference>
<dbReference type="InterPro" id="IPR005936">
    <property type="entry name" value="FtsH"/>
</dbReference>
<dbReference type="InterPro" id="IPR027417">
    <property type="entry name" value="P-loop_NTPase"/>
</dbReference>
<dbReference type="InterPro" id="IPR011546">
    <property type="entry name" value="Pept_M41_FtsH_extracell"/>
</dbReference>
<dbReference type="InterPro" id="IPR000642">
    <property type="entry name" value="Peptidase_M41"/>
</dbReference>
<dbReference type="InterPro" id="IPR037219">
    <property type="entry name" value="Peptidase_M41-like"/>
</dbReference>
<dbReference type="NCBIfam" id="TIGR01241">
    <property type="entry name" value="FtsH_fam"/>
    <property type="match status" value="1"/>
</dbReference>
<dbReference type="PANTHER" id="PTHR43655:SF2">
    <property type="entry name" value="AFG3 LIKE MATRIX AAA PEPTIDASE SUBUNIT 2, ISOFORM A"/>
    <property type="match status" value="1"/>
</dbReference>
<dbReference type="PANTHER" id="PTHR43655">
    <property type="entry name" value="ATP-DEPENDENT PROTEASE"/>
    <property type="match status" value="1"/>
</dbReference>
<dbReference type="Pfam" id="PF00004">
    <property type="entry name" value="AAA"/>
    <property type="match status" value="1"/>
</dbReference>
<dbReference type="Pfam" id="PF17862">
    <property type="entry name" value="AAA_lid_3"/>
    <property type="match status" value="1"/>
</dbReference>
<dbReference type="Pfam" id="PF06480">
    <property type="entry name" value="FtsH_ext"/>
    <property type="match status" value="1"/>
</dbReference>
<dbReference type="Pfam" id="PF01434">
    <property type="entry name" value="Peptidase_M41"/>
    <property type="match status" value="1"/>
</dbReference>
<dbReference type="SMART" id="SM00382">
    <property type="entry name" value="AAA"/>
    <property type="match status" value="1"/>
</dbReference>
<dbReference type="SUPFAM" id="SSF140990">
    <property type="entry name" value="FtsH protease domain-like"/>
    <property type="match status" value="1"/>
</dbReference>
<dbReference type="SUPFAM" id="SSF52540">
    <property type="entry name" value="P-loop containing nucleoside triphosphate hydrolases"/>
    <property type="match status" value="1"/>
</dbReference>
<dbReference type="PROSITE" id="PS00674">
    <property type="entry name" value="AAA"/>
    <property type="match status" value="1"/>
</dbReference>
<feature type="chain" id="PRO_0000400400" description="ATP-dependent zinc metalloprotease FtsH">
    <location>
        <begin position="1"/>
        <end position="671"/>
    </location>
</feature>
<feature type="topological domain" description="Cytoplasmic" evidence="1">
    <location>
        <begin position="1"/>
        <end position="22"/>
    </location>
</feature>
<feature type="transmembrane region" description="Helical" evidence="1">
    <location>
        <begin position="23"/>
        <end position="43"/>
    </location>
</feature>
<feature type="topological domain" description="Periplasmic" evidence="1">
    <location>
        <begin position="44"/>
        <end position="130"/>
    </location>
</feature>
<feature type="transmembrane region" description="Helical" evidence="1">
    <location>
        <begin position="131"/>
        <end position="151"/>
    </location>
</feature>
<feature type="topological domain" description="Cytoplasmic" evidence="1">
    <location>
        <begin position="152"/>
        <end position="671"/>
    </location>
</feature>
<feature type="region of interest" description="Disordered" evidence="2">
    <location>
        <begin position="630"/>
        <end position="671"/>
    </location>
</feature>
<feature type="active site" evidence="1">
    <location>
        <position position="448"/>
    </location>
</feature>
<feature type="binding site" evidence="1">
    <location>
        <begin position="224"/>
        <end position="231"/>
    </location>
    <ligand>
        <name>ATP</name>
        <dbReference type="ChEBI" id="CHEBI:30616"/>
    </ligand>
</feature>
<feature type="binding site" evidence="1">
    <location>
        <position position="447"/>
    </location>
    <ligand>
        <name>Zn(2+)</name>
        <dbReference type="ChEBI" id="CHEBI:29105"/>
        <note>catalytic</note>
    </ligand>
</feature>
<feature type="binding site" evidence="1">
    <location>
        <position position="451"/>
    </location>
    <ligand>
        <name>Zn(2+)</name>
        <dbReference type="ChEBI" id="CHEBI:29105"/>
        <note>catalytic</note>
    </ligand>
</feature>
<feature type="binding site" evidence="1">
    <location>
        <position position="525"/>
    </location>
    <ligand>
        <name>Zn(2+)</name>
        <dbReference type="ChEBI" id="CHEBI:29105"/>
        <note>catalytic</note>
    </ligand>
</feature>
<reference key="1">
    <citation type="journal article" date="2007" name="Proc. Natl. Acad. Sci. U.S.A.">
        <title>Deep-sea vent epsilon-proteobacterial genomes provide insights into emergence of pathogens.</title>
        <authorList>
            <person name="Nakagawa S."/>
            <person name="Takaki Y."/>
            <person name="Shimamura S."/>
            <person name="Reysenbach A.-L."/>
            <person name="Takai K."/>
            <person name="Horikoshi K."/>
        </authorList>
    </citation>
    <scope>NUCLEOTIDE SEQUENCE [LARGE SCALE GENOMIC DNA]</scope>
    <source>
        <strain>NBC37-1</strain>
    </source>
</reference>
<keyword id="KW-0067">ATP-binding</keyword>
<keyword id="KW-0997">Cell inner membrane</keyword>
<keyword id="KW-1003">Cell membrane</keyword>
<keyword id="KW-0378">Hydrolase</keyword>
<keyword id="KW-0472">Membrane</keyword>
<keyword id="KW-0479">Metal-binding</keyword>
<keyword id="KW-0482">Metalloprotease</keyword>
<keyword id="KW-0547">Nucleotide-binding</keyword>
<keyword id="KW-0645">Protease</keyword>
<keyword id="KW-0812">Transmembrane</keyword>
<keyword id="KW-1133">Transmembrane helix</keyword>
<keyword id="KW-0862">Zinc</keyword>
<sequence>MANPNNNNDNKQNNNNNFFNDNPLLAFAIFSIVIILIFKSFVGEGESLGTMMNTQGVAQTKQVKYSEIKKRIEEGAVKSVKLTPSMVEAIIEDNGRKVRYVAQNVPTYDRDLIPLLDKKKISYEGVVGNGFFSELISMMLPILIFFAIWIFLAKKMSKGMGGGILGAGKADKLINSEKPDTRFDDVQGVEEAKDEVKEIVDFLKFPERYIELGAKIPKGVLLVGPPGTGKTLLAKAVAGEASVPFFSVSGSGFIEMFVGVGASRVRDLFAQAKKEAPSIIFIDEIDAIGKSRASGGQMGGNDEREQTLNQLLAEMDGFGTDTPVIVLAATNRPETLDAALLRAGRFDRQVLVDKPDFEGRLAILKVHSKDVKLAPNVDLEIVAKQTAGLAGADLANIINEAALLAGRQNKKQIEQSDLLEAIERSFVGLEKKNRKINETEKKIVAYHESGHALMSELSEGATRVTKVSIIPRGLGALGYTLHLPEDEERFLKQKHELMAEVDVLLGGRAAEDVFIGEISTGAGNDLDRATAILKDMVSVYGMTDVAGLMVLSRSQNSFLGAGAVSTDYSDKTAEAMDSYIKSTLNERYGYVKETLQNYYGAIDNMAKELLGTEVIEGKTVRRIIEEYEQEKGMPSRLAHKDKVAKNKAEADKKEEALKKEISEESDNNKEA</sequence>
<name>FTSH_SULNB</name>
<protein>
    <recommendedName>
        <fullName evidence="1">ATP-dependent zinc metalloprotease FtsH</fullName>
        <ecNumber evidence="1">3.4.24.-</ecNumber>
    </recommendedName>
</protein>